<reference key="1">
    <citation type="journal article" date="2007" name="Genome Res.">
        <title>Reductive evolution and niche adaptation inferred from the genome of Mycobacterium ulcerans, the causative agent of Buruli ulcer.</title>
        <authorList>
            <person name="Stinear T.P."/>
            <person name="Seemann T."/>
            <person name="Pidot S."/>
            <person name="Frigui W."/>
            <person name="Reysset G."/>
            <person name="Garnier T."/>
            <person name="Meurice G."/>
            <person name="Simon D."/>
            <person name="Bouchier C."/>
            <person name="Ma L."/>
            <person name="Tichit M."/>
            <person name="Porter J.L."/>
            <person name="Ryan J."/>
            <person name="Johnson P.D.R."/>
            <person name="Davies J.K."/>
            <person name="Jenkin G.A."/>
            <person name="Small P.L.C."/>
            <person name="Jones L.M."/>
            <person name="Tekaia F."/>
            <person name="Laval F."/>
            <person name="Daffe M."/>
            <person name="Parkhill J."/>
            <person name="Cole S.T."/>
        </authorList>
    </citation>
    <scope>NUCLEOTIDE SEQUENCE [LARGE SCALE GENOMIC DNA]</scope>
    <source>
        <strain>Agy99</strain>
    </source>
</reference>
<name>PCKG_MYCUA</name>
<feature type="chain" id="PRO_1000060297" description="Phosphoenolpyruvate carboxykinase [GTP]">
    <location>
        <begin position="1"/>
        <end position="609"/>
    </location>
</feature>
<feature type="active site" evidence="1">
    <location>
        <position position="273"/>
    </location>
</feature>
<feature type="binding site" evidence="1">
    <location>
        <position position="81"/>
    </location>
    <ligand>
        <name>substrate</name>
    </ligand>
</feature>
<feature type="binding site" evidence="1">
    <location>
        <begin position="220"/>
        <end position="222"/>
    </location>
    <ligand>
        <name>substrate</name>
    </ligand>
</feature>
<feature type="binding site" evidence="1">
    <location>
        <position position="229"/>
    </location>
    <ligand>
        <name>Mn(2+)</name>
        <dbReference type="ChEBI" id="CHEBI:29035"/>
    </ligand>
</feature>
<feature type="binding site" evidence="1">
    <location>
        <position position="249"/>
    </location>
    <ligand>
        <name>Mn(2+)</name>
        <dbReference type="ChEBI" id="CHEBI:29035"/>
    </ligand>
</feature>
<feature type="binding site" evidence="1">
    <location>
        <position position="271"/>
    </location>
    <ligand>
        <name>substrate</name>
    </ligand>
</feature>
<feature type="binding site" evidence="1">
    <location>
        <begin position="272"/>
        <end position="277"/>
    </location>
    <ligand>
        <name>GTP</name>
        <dbReference type="ChEBI" id="CHEBI:37565"/>
    </ligand>
</feature>
<feature type="binding site" evidence="1">
    <location>
        <position position="296"/>
    </location>
    <ligand>
        <name>Mn(2+)</name>
        <dbReference type="ChEBI" id="CHEBI:29035"/>
    </ligand>
</feature>
<feature type="binding site" evidence="1">
    <location>
        <begin position="387"/>
        <end position="389"/>
    </location>
    <ligand>
        <name>substrate</name>
    </ligand>
</feature>
<feature type="binding site" evidence="1">
    <location>
        <position position="389"/>
    </location>
    <ligand>
        <name>GTP</name>
        <dbReference type="ChEBI" id="CHEBI:37565"/>
    </ligand>
</feature>
<feature type="binding site" evidence="1">
    <location>
        <position position="420"/>
    </location>
    <ligand>
        <name>GTP</name>
        <dbReference type="ChEBI" id="CHEBI:37565"/>
    </ligand>
</feature>
<feature type="binding site" evidence="1">
    <location>
        <begin position="515"/>
        <end position="518"/>
    </location>
    <ligand>
        <name>GTP</name>
        <dbReference type="ChEBI" id="CHEBI:37565"/>
    </ligand>
</feature>
<proteinExistence type="inferred from homology"/>
<accession>A0PMX1</accession>
<dbReference type="EC" id="4.1.1.32" evidence="1"/>
<dbReference type="EMBL" id="CP000325">
    <property type="protein sequence ID" value="ABL03690.1"/>
    <property type="molecule type" value="Genomic_DNA"/>
</dbReference>
<dbReference type="RefSeq" id="WP_011739312.1">
    <property type="nucleotide sequence ID" value="NC_008611.1"/>
</dbReference>
<dbReference type="SMR" id="A0PMX1"/>
<dbReference type="KEGG" id="mul:MUL_1101"/>
<dbReference type="eggNOG" id="COG1274">
    <property type="taxonomic scope" value="Bacteria"/>
</dbReference>
<dbReference type="HOGENOM" id="CLU_028872_1_1_11"/>
<dbReference type="UniPathway" id="UPA00138"/>
<dbReference type="Proteomes" id="UP000000765">
    <property type="component" value="Chromosome"/>
</dbReference>
<dbReference type="GO" id="GO:0005829">
    <property type="term" value="C:cytosol"/>
    <property type="evidence" value="ECO:0007669"/>
    <property type="project" value="TreeGrafter"/>
</dbReference>
<dbReference type="GO" id="GO:0005525">
    <property type="term" value="F:GTP binding"/>
    <property type="evidence" value="ECO:0007669"/>
    <property type="project" value="UniProtKB-UniRule"/>
</dbReference>
<dbReference type="GO" id="GO:0030145">
    <property type="term" value="F:manganese ion binding"/>
    <property type="evidence" value="ECO:0007669"/>
    <property type="project" value="UniProtKB-UniRule"/>
</dbReference>
<dbReference type="GO" id="GO:0004613">
    <property type="term" value="F:phosphoenolpyruvate carboxykinase (GTP) activity"/>
    <property type="evidence" value="ECO:0007669"/>
    <property type="project" value="UniProtKB-UniRule"/>
</dbReference>
<dbReference type="GO" id="GO:0071333">
    <property type="term" value="P:cellular response to glucose stimulus"/>
    <property type="evidence" value="ECO:0007669"/>
    <property type="project" value="TreeGrafter"/>
</dbReference>
<dbReference type="GO" id="GO:0006094">
    <property type="term" value="P:gluconeogenesis"/>
    <property type="evidence" value="ECO:0007669"/>
    <property type="project" value="UniProtKB-UniRule"/>
</dbReference>
<dbReference type="GO" id="GO:0046327">
    <property type="term" value="P:glycerol biosynthetic process from pyruvate"/>
    <property type="evidence" value="ECO:0007669"/>
    <property type="project" value="TreeGrafter"/>
</dbReference>
<dbReference type="GO" id="GO:0006107">
    <property type="term" value="P:oxaloacetate metabolic process"/>
    <property type="evidence" value="ECO:0007669"/>
    <property type="project" value="TreeGrafter"/>
</dbReference>
<dbReference type="GO" id="GO:0019543">
    <property type="term" value="P:propionate catabolic process"/>
    <property type="evidence" value="ECO:0007669"/>
    <property type="project" value="TreeGrafter"/>
</dbReference>
<dbReference type="GO" id="GO:0033993">
    <property type="term" value="P:response to lipid"/>
    <property type="evidence" value="ECO:0007669"/>
    <property type="project" value="TreeGrafter"/>
</dbReference>
<dbReference type="GO" id="GO:0042594">
    <property type="term" value="P:response to starvation"/>
    <property type="evidence" value="ECO:0007669"/>
    <property type="project" value="TreeGrafter"/>
</dbReference>
<dbReference type="CDD" id="cd00819">
    <property type="entry name" value="PEPCK_GTP"/>
    <property type="match status" value="1"/>
</dbReference>
<dbReference type="FunFam" id="3.40.449.10:FF:000005">
    <property type="entry name" value="Phosphoenolpyruvate carboxykinase [GTP]"/>
    <property type="match status" value="1"/>
</dbReference>
<dbReference type="Gene3D" id="3.90.228.20">
    <property type="match status" value="1"/>
</dbReference>
<dbReference type="Gene3D" id="3.40.449.10">
    <property type="entry name" value="Phosphoenolpyruvate Carboxykinase, domain 1"/>
    <property type="match status" value="1"/>
</dbReference>
<dbReference type="Gene3D" id="2.170.8.10">
    <property type="entry name" value="Phosphoenolpyruvate Carboxykinase, domain 2"/>
    <property type="match status" value="1"/>
</dbReference>
<dbReference type="HAMAP" id="MF_00452">
    <property type="entry name" value="PEPCK_GTP"/>
    <property type="match status" value="1"/>
</dbReference>
<dbReference type="InterPro" id="IPR018091">
    <property type="entry name" value="PEP_carboxykin_GTP_CS"/>
</dbReference>
<dbReference type="InterPro" id="IPR013035">
    <property type="entry name" value="PEP_carboxykinase_C"/>
</dbReference>
<dbReference type="InterPro" id="IPR008209">
    <property type="entry name" value="PEP_carboxykinase_GTP"/>
</dbReference>
<dbReference type="InterPro" id="IPR035077">
    <property type="entry name" value="PEP_carboxykinase_GTP_C"/>
</dbReference>
<dbReference type="InterPro" id="IPR035078">
    <property type="entry name" value="PEP_carboxykinase_GTP_N"/>
</dbReference>
<dbReference type="InterPro" id="IPR008210">
    <property type="entry name" value="PEP_carboxykinase_N"/>
</dbReference>
<dbReference type="NCBIfam" id="NF003253">
    <property type="entry name" value="PRK04210.1"/>
    <property type="match status" value="1"/>
</dbReference>
<dbReference type="PANTHER" id="PTHR11561">
    <property type="entry name" value="PHOSPHOENOLPYRUVATE CARBOXYKINASE"/>
    <property type="match status" value="1"/>
</dbReference>
<dbReference type="PANTHER" id="PTHR11561:SF0">
    <property type="entry name" value="PHOSPHOENOLPYRUVATE CARBOXYKINASE [GTP]-RELATED"/>
    <property type="match status" value="1"/>
</dbReference>
<dbReference type="Pfam" id="PF00821">
    <property type="entry name" value="PEPCK_GTP"/>
    <property type="match status" value="1"/>
</dbReference>
<dbReference type="Pfam" id="PF17297">
    <property type="entry name" value="PEPCK_N"/>
    <property type="match status" value="1"/>
</dbReference>
<dbReference type="PIRSF" id="PIRSF001348">
    <property type="entry name" value="PEP_carboxykinase_GTP"/>
    <property type="match status" value="1"/>
</dbReference>
<dbReference type="SUPFAM" id="SSF68923">
    <property type="entry name" value="PEP carboxykinase N-terminal domain"/>
    <property type="match status" value="1"/>
</dbReference>
<dbReference type="SUPFAM" id="SSF53795">
    <property type="entry name" value="PEP carboxykinase-like"/>
    <property type="match status" value="1"/>
</dbReference>
<dbReference type="PROSITE" id="PS00505">
    <property type="entry name" value="PEPCK_GTP"/>
    <property type="match status" value="1"/>
</dbReference>
<keyword id="KW-0963">Cytoplasm</keyword>
<keyword id="KW-0210">Decarboxylase</keyword>
<keyword id="KW-0312">Gluconeogenesis</keyword>
<keyword id="KW-0342">GTP-binding</keyword>
<keyword id="KW-0456">Lyase</keyword>
<keyword id="KW-0464">Manganese</keyword>
<keyword id="KW-0479">Metal-binding</keyword>
<keyword id="KW-0547">Nucleotide-binding</keyword>
<sequence length="609" mass="67846">MTSATIPGLDTAPTNHQGLLSWVQEVAELTQPDRVVFADGSDEEFHRLSAQLVDAGTFTRLNDEKFPNSYLALSDPSDVARVESRTFICSEREIDAGPTNNWMNPSEMRTLMTDLYRGCMRGRTMYVVPFCMGPLGAEDPKLGVEITDSEYVVVSMKVMTRMGTAALEKMGQDGFFVKALHSVGAPLEDGQADVPWPCSDTKYITHFPETREIWSYGSGYGGNALLGKKCYSLRIASAMARDEGWLAEHMLILKLISPENKAYYIAAAFPSACGKTNLAMLQPTIPGWRAETLGDDIAWMRFGKDGRLYAVNPEFGFFGVAPGTNWKSNPNAMRTIAAGNTVFTNVALTDDGEVWWEGLEGDPQHLVDWKGNEWYFRETETTAAHPNSRYCTPMSQCPILAPEWDDPQGVPISAILFGGRRKTTVPLVTQARDWQHGVFIGATLGSEQTAAAEGKVGNVRRDPMAMLPFMGYNVGDYVQHWIDIGKNSDESKLPQVFFVNWFRRGEDHRFLWPGFGENSRVMKWIVDRIEHKAGGKTTPIGTVPTVEDLDLEGLDANPADVSEALAVNAQEWREELPLIEEWLQFIGEKLPTGIKDEFDALKERLRDAE</sequence>
<gene>
    <name evidence="1" type="primary">pckG</name>
    <name type="ordered locus">MUL_1101</name>
</gene>
<evidence type="ECO:0000255" key="1">
    <source>
        <dbReference type="HAMAP-Rule" id="MF_00452"/>
    </source>
</evidence>
<comment type="function">
    <text evidence="1">Catalyzes the conversion of oxaloacetate (OAA) to phosphoenolpyruvate (PEP), the rate-limiting step in the metabolic pathway that produces glucose from lactate and other precursors derived from the citric acid cycle.</text>
</comment>
<comment type="catalytic activity">
    <reaction evidence="1">
        <text>oxaloacetate + GTP = phosphoenolpyruvate + GDP + CO2</text>
        <dbReference type="Rhea" id="RHEA:10388"/>
        <dbReference type="ChEBI" id="CHEBI:16452"/>
        <dbReference type="ChEBI" id="CHEBI:16526"/>
        <dbReference type="ChEBI" id="CHEBI:37565"/>
        <dbReference type="ChEBI" id="CHEBI:58189"/>
        <dbReference type="ChEBI" id="CHEBI:58702"/>
        <dbReference type="EC" id="4.1.1.32"/>
    </reaction>
</comment>
<comment type="cofactor">
    <cofactor evidence="1">
        <name>Mn(2+)</name>
        <dbReference type="ChEBI" id="CHEBI:29035"/>
    </cofactor>
    <text evidence="1">Binds 1 Mn(2+) ion per subunit.</text>
</comment>
<comment type="pathway">
    <text evidence="1">Carbohydrate biosynthesis; gluconeogenesis.</text>
</comment>
<comment type="subunit">
    <text evidence="1">Monomer.</text>
</comment>
<comment type="subcellular location">
    <subcellularLocation>
        <location evidence="1">Cytoplasm</location>
    </subcellularLocation>
</comment>
<comment type="similarity">
    <text evidence="1">Belongs to the phosphoenolpyruvate carboxykinase [GTP] family.</text>
</comment>
<organism>
    <name type="scientific">Mycobacterium ulcerans (strain Agy99)</name>
    <dbReference type="NCBI Taxonomy" id="362242"/>
    <lineage>
        <taxon>Bacteria</taxon>
        <taxon>Bacillati</taxon>
        <taxon>Actinomycetota</taxon>
        <taxon>Actinomycetes</taxon>
        <taxon>Mycobacteriales</taxon>
        <taxon>Mycobacteriaceae</taxon>
        <taxon>Mycobacterium</taxon>
        <taxon>Mycobacterium ulcerans group</taxon>
    </lineage>
</organism>
<protein>
    <recommendedName>
        <fullName evidence="1">Phosphoenolpyruvate carboxykinase [GTP]</fullName>
        <shortName evidence="1">PEP carboxykinase</shortName>
        <shortName evidence="1">PEPCK</shortName>
        <ecNumber evidence="1">4.1.1.32</ecNumber>
    </recommendedName>
</protein>